<comment type="function">
    <text evidence="1">This protein binds to 23S rRNA in the presence of protein L20.</text>
</comment>
<comment type="subunit">
    <text evidence="1">Part of the 50S ribosomal subunit. Contacts protein L20.</text>
</comment>
<comment type="similarity">
    <text evidence="1">Belongs to the bacterial ribosomal protein bL21 family.</text>
</comment>
<reference key="1">
    <citation type="submission" date="2009-02" db="EMBL/GenBank/DDBJ databases">
        <title>Vibrio splendidus str. LGP32 complete genome.</title>
        <authorList>
            <person name="Mazel D."/>
            <person name="Le Roux F."/>
        </authorList>
    </citation>
    <scope>NUCLEOTIDE SEQUENCE [LARGE SCALE GENOMIC DNA]</scope>
    <source>
        <strain>LGP32</strain>
    </source>
</reference>
<feature type="chain" id="PRO_1000166751" description="Large ribosomal subunit protein bL21">
    <location>
        <begin position="1"/>
        <end position="103"/>
    </location>
</feature>
<proteinExistence type="inferred from homology"/>
<name>RL21_VIBA3</name>
<accession>B7VID3</accession>
<dbReference type="EMBL" id="FM954972">
    <property type="protein sequence ID" value="CAV17370.1"/>
    <property type="molecule type" value="Genomic_DNA"/>
</dbReference>
<dbReference type="SMR" id="B7VID3"/>
<dbReference type="STRING" id="575788.VS_0361"/>
<dbReference type="KEGG" id="vsp:VS_0361"/>
<dbReference type="eggNOG" id="COG0261">
    <property type="taxonomic scope" value="Bacteria"/>
</dbReference>
<dbReference type="HOGENOM" id="CLU_061463_3_3_6"/>
<dbReference type="Proteomes" id="UP000009100">
    <property type="component" value="Chromosome 1"/>
</dbReference>
<dbReference type="GO" id="GO:0005737">
    <property type="term" value="C:cytoplasm"/>
    <property type="evidence" value="ECO:0007669"/>
    <property type="project" value="UniProtKB-ARBA"/>
</dbReference>
<dbReference type="GO" id="GO:1990904">
    <property type="term" value="C:ribonucleoprotein complex"/>
    <property type="evidence" value="ECO:0007669"/>
    <property type="project" value="UniProtKB-KW"/>
</dbReference>
<dbReference type="GO" id="GO:0005840">
    <property type="term" value="C:ribosome"/>
    <property type="evidence" value="ECO:0007669"/>
    <property type="project" value="UniProtKB-KW"/>
</dbReference>
<dbReference type="GO" id="GO:0019843">
    <property type="term" value="F:rRNA binding"/>
    <property type="evidence" value="ECO:0007669"/>
    <property type="project" value="UniProtKB-UniRule"/>
</dbReference>
<dbReference type="GO" id="GO:0003735">
    <property type="term" value="F:structural constituent of ribosome"/>
    <property type="evidence" value="ECO:0007669"/>
    <property type="project" value="InterPro"/>
</dbReference>
<dbReference type="GO" id="GO:0006412">
    <property type="term" value="P:translation"/>
    <property type="evidence" value="ECO:0007669"/>
    <property type="project" value="UniProtKB-UniRule"/>
</dbReference>
<dbReference type="HAMAP" id="MF_01363">
    <property type="entry name" value="Ribosomal_bL21"/>
    <property type="match status" value="1"/>
</dbReference>
<dbReference type="InterPro" id="IPR028909">
    <property type="entry name" value="bL21-like"/>
</dbReference>
<dbReference type="InterPro" id="IPR036164">
    <property type="entry name" value="bL21-like_sf"/>
</dbReference>
<dbReference type="InterPro" id="IPR001787">
    <property type="entry name" value="Ribosomal_bL21"/>
</dbReference>
<dbReference type="InterPro" id="IPR018258">
    <property type="entry name" value="Ribosomal_bL21_CS"/>
</dbReference>
<dbReference type="NCBIfam" id="TIGR00061">
    <property type="entry name" value="L21"/>
    <property type="match status" value="1"/>
</dbReference>
<dbReference type="PANTHER" id="PTHR21349">
    <property type="entry name" value="50S RIBOSOMAL PROTEIN L21"/>
    <property type="match status" value="1"/>
</dbReference>
<dbReference type="PANTHER" id="PTHR21349:SF0">
    <property type="entry name" value="LARGE RIBOSOMAL SUBUNIT PROTEIN BL21M"/>
    <property type="match status" value="1"/>
</dbReference>
<dbReference type="Pfam" id="PF00829">
    <property type="entry name" value="Ribosomal_L21p"/>
    <property type="match status" value="1"/>
</dbReference>
<dbReference type="SUPFAM" id="SSF141091">
    <property type="entry name" value="L21p-like"/>
    <property type="match status" value="1"/>
</dbReference>
<dbReference type="PROSITE" id="PS01169">
    <property type="entry name" value="RIBOSOMAL_L21"/>
    <property type="match status" value="1"/>
</dbReference>
<protein>
    <recommendedName>
        <fullName evidence="1">Large ribosomal subunit protein bL21</fullName>
    </recommendedName>
    <alternativeName>
        <fullName evidence="2">50S ribosomal protein L21</fullName>
    </alternativeName>
</protein>
<keyword id="KW-0687">Ribonucleoprotein</keyword>
<keyword id="KW-0689">Ribosomal protein</keyword>
<keyword id="KW-0694">RNA-binding</keyword>
<keyword id="KW-0699">rRNA-binding</keyword>
<organism>
    <name type="scientific">Vibrio atlanticus (strain LGP32)</name>
    <name type="common">Vibrio splendidus (strain Mel32)</name>
    <dbReference type="NCBI Taxonomy" id="575788"/>
    <lineage>
        <taxon>Bacteria</taxon>
        <taxon>Pseudomonadati</taxon>
        <taxon>Pseudomonadota</taxon>
        <taxon>Gammaproteobacteria</taxon>
        <taxon>Vibrionales</taxon>
        <taxon>Vibrionaceae</taxon>
        <taxon>Vibrio</taxon>
    </lineage>
</organism>
<sequence length="103" mass="11409">MYAVFQSGGKQHRVSEGQTLRLEKLDVETGATVEFDKVLLVANGEEIAVGAPLVEGGKVTAEVVQHGRGDKVKIVKFRRRKHSRKQAGHRQWFTEVKITGINA</sequence>
<evidence type="ECO:0000255" key="1">
    <source>
        <dbReference type="HAMAP-Rule" id="MF_01363"/>
    </source>
</evidence>
<evidence type="ECO:0000305" key="2"/>
<gene>
    <name evidence="1" type="primary">rplU</name>
    <name type="ordered locus">VS_0361</name>
</gene>